<organism>
    <name type="scientific">Cereibacter sphaeroides (strain ATCC 17023 / DSM 158 / JCM 6121 / CCUG 31486 / LMG 2827 / NBRC 12203 / NCIMB 8253 / ATH 2.4.1.)</name>
    <name type="common">Rhodobacter sphaeroides</name>
    <dbReference type="NCBI Taxonomy" id="272943"/>
    <lineage>
        <taxon>Bacteria</taxon>
        <taxon>Pseudomonadati</taxon>
        <taxon>Pseudomonadota</taxon>
        <taxon>Alphaproteobacteria</taxon>
        <taxon>Rhodobacterales</taxon>
        <taxon>Paracoccaceae</taxon>
        <taxon>Cereibacter</taxon>
    </lineage>
</organism>
<sequence>MAIDLLSTFIKPMHREGTKFVAIFAVVTLVLFLIWEPLGWIGVGLTVWCYYFFRDPVRVTPTREGLIVSPADGVVSLIEPAVPPAELGMGPAPMTRVSVFMNVFDCHVNRAPIGGTVTAVAYRPGKFLNASLDKASEDNERNALAIRLADGRQIAVVQIAGLVARRILCEVREGTPLLTGERFGMIRFGSRLDVYLPEGVQPLVCLGQVMTSGETVLADLASPEARRTGAAR</sequence>
<accession>Q3IZY9</accession>
<dbReference type="EC" id="4.1.1.65" evidence="1"/>
<dbReference type="EMBL" id="CP000143">
    <property type="protein sequence ID" value="ABA79895.1"/>
    <property type="molecule type" value="Genomic_DNA"/>
</dbReference>
<dbReference type="RefSeq" id="YP_353796.1">
    <property type="nucleotide sequence ID" value="NC_007493.2"/>
</dbReference>
<dbReference type="STRING" id="272943.RSP_0719"/>
<dbReference type="EnsemblBacteria" id="ABA79895">
    <property type="protein sequence ID" value="ABA79895"/>
    <property type="gene ID" value="RSP_0719"/>
</dbReference>
<dbReference type="KEGG" id="rsp:RSP_0719"/>
<dbReference type="PATRIC" id="fig|272943.9.peg.2672"/>
<dbReference type="eggNOG" id="COG0688">
    <property type="taxonomic scope" value="Bacteria"/>
</dbReference>
<dbReference type="OrthoDB" id="9790893at2"/>
<dbReference type="PhylomeDB" id="Q3IZY9"/>
<dbReference type="UniPathway" id="UPA00558">
    <property type="reaction ID" value="UER00616"/>
</dbReference>
<dbReference type="Proteomes" id="UP000002703">
    <property type="component" value="Chromosome 1"/>
</dbReference>
<dbReference type="GO" id="GO:0005886">
    <property type="term" value="C:plasma membrane"/>
    <property type="evidence" value="ECO:0007669"/>
    <property type="project" value="UniProtKB-SubCell"/>
</dbReference>
<dbReference type="GO" id="GO:0004609">
    <property type="term" value="F:phosphatidylserine decarboxylase activity"/>
    <property type="evidence" value="ECO:0007669"/>
    <property type="project" value="UniProtKB-UniRule"/>
</dbReference>
<dbReference type="GO" id="GO:0006646">
    <property type="term" value="P:phosphatidylethanolamine biosynthetic process"/>
    <property type="evidence" value="ECO:0007669"/>
    <property type="project" value="UniProtKB-UniRule"/>
</dbReference>
<dbReference type="HAMAP" id="MF_00664">
    <property type="entry name" value="PS_decarb_PSD_A"/>
    <property type="match status" value="1"/>
</dbReference>
<dbReference type="InterPro" id="IPR003817">
    <property type="entry name" value="PS_Dcarbxylase"/>
</dbReference>
<dbReference type="InterPro" id="IPR033175">
    <property type="entry name" value="PSD-A"/>
</dbReference>
<dbReference type="NCBIfam" id="NF003677">
    <property type="entry name" value="PRK05305.1-1"/>
    <property type="match status" value="1"/>
</dbReference>
<dbReference type="NCBIfam" id="NF003678">
    <property type="entry name" value="PRK05305.1-2"/>
    <property type="match status" value="1"/>
</dbReference>
<dbReference type="NCBIfam" id="NF003679">
    <property type="entry name" value="PRK05305.1-3"/>
    <property type="match status" value="1"/>
</dbReference>
<dbReference type="NCBIfam" id="NF003685">
    <property type="entry name" value="PRK05305.2-5"/>
    <property type="match status" value="1"/>
</dbReference>
<dbReference type="PANTHER" id="PTHR35809">
    <property type="entry name" value="ARCHAETIDYLSERINE DECARBOXYLASE PROENZYME-RELATED"/>
    <property type="match status" value="1"/>
</dbReference>
<dbReference type="PANTHER" id="PTHR35809:SF1">
    <property type="entry name" value="ARCHAETIDYLSERINE DECARBOXYLASE PROENZYME-RELATED"/>
    <property type="match status" value="1"/>
</dbReference>
<dbReference type="Pfam" id="PF02666">
    <property type="entry name" value="PS_Dcarbxylase"/>
    <property type="match status" value="1"/>
</dbReference>
<keyword id="KW-1003">Cell membrane</keyword>
<keyword id="KW-0210">Decarboxylase</keyword>
<keyword id="KW-0444">Lipid biosynthesis</keyword>
<keyword id="KW-0443">Lipid metabolism</keyword>
<keyword id="KW-0456">Lyase</keyword>
<keyword id="KW-0472">Membrane</keyword>
<keyword id="KW-0594">Phospholipid biosynthesis</keyword>
<keyword id="KW-1208">Phospholipid metabolism</keyword>
<keyword id="KW-0670">Pyruvate</keyword>
<keyword id="KW-1185">Reference proteome</keyword>
<keyword id="KW-0865">Zymogen</keyword>
<gene>
    <name evidence="1" type="primary">psd</name>
    <name type="ordered locus">RHOS4_23270</name>
    <name type="ORF">RSP_0719</name>
</gene>
<evidence type="ECO:0000255" key="1">
    <source>
        <dbReference type="HAMAP-Rule" id="MF_00664"/>
    </source>
</evidence>
<reference key="1">
    <citation type="submission" date="2005-09" db="EMBL/GenBank/DDBJ databases">
        <title>Complete sequence of chromosome 1 of Rhodobacter sphaeroides 2.4.1.</title>
        <authorList>
            <person name="Copeland A."/>
            <person name="Lucas S."/>
            <person name="Lapidus A."/>
            <person name="Barry K."/>
            <person name="Detter J.C."/>
            <person name="Glavina T."/>
            <person name="Hammon N."/>
            <person name="Israni S."/>
            <person name="Pitluck S."/>
            <person name="Richardson P."/>
            <person name="Mackenzie C."/>
            <person name="Choudhary M."/>
            <person name="Larimer F."/>
            <person name="Hauser L.J."/>
            <person name="Land M."/>
            <person name="Donohue T.J."/>
            <person name="Kaplan S."/>
        </authorList>
    </citation>
    <scope>NUCLEOTIDE SEQUENCE [LARGE SCALE GENOMIC DNA]</scope>
    <source>
        <strain>ATCC 17023 / DSM 158 / JCM 6121 / CCUG 31486 / LMG 2827 / NBRC 12203 / NCIMB 8253 / ATH 2.4.1.</strain>
    </source>
</reference>
<protein>
    <recommendedName>
        <fullName evidence="1">Phosphatidylserine decarboxylase proenzyme</fullName>
        <ecNumber evidence="1">4.1.1.65</ecNumber>
    </recommendedName>
    <component>
        <recommendedName>
            <fullName evidence="1">Phosphatidylserine decarboxylase alpha chain</fullName>
        </recommendedName>
    </component>
    <component>
        <recommendedName>
            <fullName evidence="1">Phosphatidylserine decarboxylase beta chain</fullName>
        </recommendedName>
    </component>
</protein>
<proteinExistence type="inferred from homology"/>
<name>PSD_CERS4</name>
<comment type="function">
    <text evidence="1">Catalyzes the formation of phosphatidylethanolamine (PtdEtn) from phosphatidylserine (PtdSer).</text>
</comment>
<comment type="catalytic activity">
    <reaction evidence="1">
        <text>a 1,2-diacyl-sn-glycero-3-phospho-L-serine + H(+) = a 1,2-diacyl-sn-glycero-3-phosphoethanolamine + CO2</text>
        <dbReference type="Rhea" id="RHEA:20828"/>
        <dbReference type="ChEBI" id="CHEBI:15378"/>
        <dbReference type="ChEBI" id="CHEBI:16526"/>
        <dbReference type="ChEBI" id="CHEBI:57262"/>
        <dbReference type="ChEBI" id="CHEBI:64612"/>
        <dbReference type="EC" id="4.1.1.65"/>
    </reaction>
</comment>
<comment type="cofactor">
    <cofactor evidence="1">
        <name>pyruvate</name>
        <dbReference type="ChEBI" id="CHEBI:15361"/>
    </cofactor>
    <text evidence="1">Binds 1 pyruvoyl group covalently per subunit.</text>
</comment>
<comment type="pathway">
    <text evidence="1">Phospholipid metabolism; phosphatidylethanolamine biosynthesis; phosphatidylethanolamine from CDP-diacylglycerol: step 2/2.</text>
</comment>
<comment type="subunit">
    <text evidence="1">Heterodimer of a large membrane-associated beta subunit and a small pyruvoyl-containing alpha subunit.</text>
</comment>
<comment type="subcellular location">
    <subcellularLocation>
        <location evidence="1">Cell membrane</location>
        <topology evidence="1">Peripheral membrane protein</topology>
    </subcellularLocation>
</comment>
<comment type="PTM">
    <text evidence="1">Is synthesized initially as an inactive proenzyme. Formation of the active enzyme involves a self-maturation process in which the active site pyruvoyl group is generated from an internal serine residue via an autocatalytic post-translational modification. Two non-identical subunits are generated from the proenzyme in this reaction, and the pyruvate is formed at the N-terminus of the alpha chain, which is derived from the carboxyl end of the proenzyme. The post-translation cleavage follows an unusual pathway, termed non-hydrolytic serinolysis, in which the side chain hydroxyl group of the serine supplies its oxygen atom to form the C-terminus of the beta chain, while the remainder of the serine residue undergoes an oxidative deamination to produce ammonia and the pyruvoyl prosthetic group on the alpha chain.</text>
</comment>
<comment type="similarity">
    <text evidence="1">Belongs to the phosphatidylserine decarboxylase family. PSD-A subfamily.</text>
</comment>
<feature type="chain" id="PRO_0000262253" description="Phosphatidylserine decarboxylase beta chain" evidence="1">
    <location>
        <begin position="1"/>
        <end position="189"/>
    </location>
</feature>
<feature type="chain" id="PRO_0000262254" description="Phosphatidylserine decarboxylase alpha chain" evidence="1">
    <location>
        <begin position="190"/>
        <end position="232"/>
    </location>
</feature>
<feature type="active site" description="Schiff-base intermediate with substrate; via pyruvic acid" evidence="1">
    <location>
        <position position="190"/>
    </location>
</feature>
<feature type="site" description="Cleavage (non-hydrolytic); by autocatalysis" evidence="1">
    <location>
        <begin position="189"/>
        <end position="190"/>
    </location>
</feature>
<feature type="modified residue" description="Pyruvic acid (Ser); by autocatalysis" evidence="1">
    <location>
        <position position="190"/>
    </location>
</feature>